<organism>
    <name type="scientific">Sus scrofa</name>
    <name type="common">Pig</name>
    <dbReference type="NCBI Taxonomy" id="9823"/>
    <lineage>
        <taxon>Eukaryota</taxon>
        <taxon>Metazoa</taxon>
        <taxon>Chordata</taxon>
        <taxon>Craniata</taxon>
        <taxon>Vertebrata</taxon>
        <taxon>Euteleostomi</taxon>
        <taxon>Mammalia</taxon>
        <taxon>Eutheria</taxon>
        <taxon>Laurasiatheria</taxon>
        <taxon>Artiodactyla</taxon>
        <taxon>Suina</taxon>
        <taxon>Suidae</taxon>
        <taxon>Sus</taxon>
    </lineage>
</organism>
<comment type="function">
    <text evidence="3 4">Calcium-regulated membrane-binding protein whose affinity for calcium is greatly enhanced by anionic phospholipids. It binds two calcium ions with high affinity. May be involved in heat-stress response. Inhibits PCSK9-enhanced LDLR degradation, probably reduces PCSK9 protein levels via a translational mechanism but also competes with LDLR for binding with PCSK9. Binds to endosomes damaged by phagocytosis of particulate wear debris and participates in endosomal membrane stabilization, thereby limiting NLRP3 inflammasome activation (By similarity). Required for endothelial cell surface plasmin generation and may support fibrinolytic surveillance and neoangiogenesis (By similarity).</text>
</comment>
<comment type="function">
    <text evidence="10">(Microbial infection) May serve as a receptor for classical swine fever virus (CSFV) (PubMed:25701745). Promotes CSFV infection (PubMed:25701745).</text>
</comment>
<comment type="subunit">
    <text evidence="2 3 4 5">Heterotetramer containing 2 light chains of S100A10/p11 and 2 heavy chains of ANXA2/p36 (By similarity). Interacts with ATP1B1 (By similarity). Interacts with DYSF (By similarity). Interacts with COCH. Interacts (via repeat Annexin 1) with PCSK9 (via the C-terminal domain); the interaction inhibits the degradation of LDLR. Interacts with CEACAM1 (via the cytoplasmic domain); this interaction is regulated by phosphorylation of CEACAM1 (By similarity). Interacts with APPL2 and APPL1; targets APPL2 to endosomes and acting in parallel to RAB5A (By similarity). Interacts with S100A4 (By similarity). May interact with UBAP2 (By similarity). Interacts with PLEKHG4B; this interaction is required for PLEKHG4B localization to cell-cell adhesions (By similarity).</text>
</comment>
<comment type="subunit">
    <text evidence="10">(Microbial infection) Interacts with classical swine fever virus envelope glycoprotein E2.</text>
</comment>
<comment type="interaction">
    <interactant intactId="EBI-7437630">
        <id>P19620</id>
    </interactant>
    <interactant intactId="EBI-12522488">
        <id>Q9YS30</id>
    </interactant>
    <organismsDiffer>true</organismsDiffer>
    <experiments>3</experiments>
</comment>
<comment type="subcellular location">
    <subcellularLocation>
        <location>Secreted</location>
        <location>Extracellular space</location>
        <location>Extracellular matrix</location>
        <location>Basement membrane</location>
    </subcellularLocation>
    <subcellularLocation>
        <location evidence="1">Melanosome</location>
    </subcellularLocation>
    <text>In the lamina beneath the plasma membrane.</text>
</comment>
<comment type="induction">
    <text evidence="8 10">(Microbial infection) Up-regulated following infection by classical swine fever virus (CSFV) (PubMed:19367723). Up-regulated by the presence of CSFV envelope glycoprotein E2 alone (PubMed:25701745).</text>
</comment>
<comment type="domain">
    <text>A pair of annexin repeats may form one binding site for calcium and phospholipid.</text>
</comment>
<comment type="PTM">
    <text evidence="1">ISGylated.</text>
</comment>
<comment type="miscellaneous">
    <text evidence="10">It may cross-link plasma membrane phospholipids with actin and the cytoskeleton and be involved with exocytosis. Treatment of cell with antibodies against the protein reduces classical swine fever virus infection (PubMed:25701745).</text>
</comment>
<comment type="similarity">
    <text evidence="6 12">Belongs to the annexin family.</text>
</comment>
<comment type="online information" name="Protein Spotlight">
    <link uri="https://www.proteinspotlight.org/back_issues/086"/>
    <text>Red velvet - Issue 86 of September 2007</text>
</comment>
<gene>
    <name type="primary">ANXA2</name>
    <name type="synonym">ANX2</name>
</gene>
<name>ANXA2_PIG</name>
<reference key="1">
    <citation type="journal article" date="2005" name="Reprod. Fertil. Dev.">
        <title>Identification of metaphase II-specific gene transcripts in porcine oocytes and their expression in early stage embryos.</title>
        <authorList>
            <person name="Cui X.S."/>
            <person name="Song H."/>
            <person name="Kim N.H."/>
        </authorList>
    </citation>
    <scope>NUCLEOTIDE SEQUENCE [MRNA]</scope>
</reference>
<reference key="2">
    <citation type="journal article" date="2007" name="Proteins">
        <title>Annexin A2 / p11 interaction: new insights into annexin A2 tetramer structure by chemical cross-linking, high-resolution mass spectrometry, and computational modeling.</title>
        <authorList>
            <person name="Schulz D.M."/>
            <person name="Kalkhof S."/>
            <person name="Schmidt A."/>
            <person name="Ihling C."/>
            <person name="Stingl C."/>
            <person name="Mechtler K."/>
            <person name="Zschoernig O."/>
            <person name="Sinz A."/>
        </authorList>
    </citation>
    <scope>PROTEIN SEQUENCE OF 2-339</scope>
    <scope>ACETYLATION AT SER-2</scope>
</reference>
<reference key="3">
    <citation type="journal article" date="1988" name="FEBS Lett.">
        <title>A discontinuous epitope on p36, the major substrate of src tyrosine-protein-kinase, brings the phosphorylation site into the neighbourhood of a consensus sequence for Ca2+/lipid-binding proteins.</title>
        <authorList>
            <person name="Johnsson N."/>
            <person name="Johnsson K."/>
            <person name="Weber K."/>
        </authorList>
    </citation>
    <scope>PROTEIN SEQUENCE OF 2-70</scope>
</reference>
<reference key="4">
    <citation type="journal article" date="1988" name="EMBO J.">
        <title>p36, the major cytoplasmic substrate of src tyrosine protein kinase, binds to its p11 regulatory subunit via a short amino-terminal amphipathic helix.</title>
        <authorList>
            <person name="Johnsson N."/>
            <person name="Marriott G."/>
            <person name="Weber K."/>
        </authorList>
    </citation>
    <scope>PROTEIN SEQUENCE OF 2-30</scope>
</reference>
<reference key="5">
    <citation type="journal article" date="1986" name="FEBS Lett.">
        <title>Binding sites for calcium, lipid and p11 on p36, the substrate of retroviral tyrosine-specific protein kinases.</title>
        <authorList>
            <person name="Johnsson N."/>
            <person name="Vandekerckhove J."/>
            <person name="Van Damme J."/>
            <person name="Weber K."/>
        </authorList>
    </citation>
    <scope>PROTEIN SEQUENCE OF 213-234</scope>
</reference>
<reference key="6">
    <citation type="journal article" date="2008" name="J. Proteome Res.">
        <title>Proteomic alteration of PK-15 cells after infection by classical swine fever virus.</title>
        <authorList>
            <person name="Sun J."/>
            <person name="Jiang Y."/>
            <person name="Shi Z."/>
            <person name="Yan Y."/>
            <person name="Guo H."/>
            <person name="He F."/>
            <person name="Tu C."/>
        </authorList>
    </citation>
    <scope>IDENTIFICATION BY MASS SPECTROMETRY</scope>
    <scope>INDUCTION (MICROBIAL INFECTION)</scope>
</reference>
<reference key="7">
    <citation type="journal article" date="2015" name="Virus Res.">
        <title>Annexin 2 is a host protein binding to classical swine fever virus E2 glycoprotein and promoting viral growth in PK-15 cells.</title>
        <authorList>
            <person name="Yang Z."/>
            <person name="Shi Z."/>
            <person name="Guo H."/>
            <person name="Qu H."/>
            <person name="Zhang Y."/>
            <person name="Tu C."/>
        </authorList>
    </citation>
    <scope>FUNCTION (MICROBIAL INFECTION)</scope>
    <scope>INTERACTION WITH CLASSICAL SWINE FEVER VIRUS ENVELOPE GLYCOPROTEIN E2 (MICROBIAL INFECTION)</scope>
    <scope>INDUCTION BY CLASSICAL SWINE FEVER VIRUS ENVELOPE GLYCOPROTEIN E2 (MICROBIAL INFECTION)</scope>
</reference>
<keyword id="KW-0007">Acetylation</keyword>
<keyword id="KW-0041">Annexin</keyword>
<keyword id="KW-0084">Basement membrane</keyword>
<keyword id="KW-0106">Calcium</keyword>
<keyword id="KW-0111">Calcium/phospholipid-binding</keyword>
<keyword id="KW-0903">Direct protein sequencing</keyword>
<keyword id="KW-0272">Extracellular matrix</keyword>
<keyword id="KW-1017">Isopeptide bond</keyword>
<keyword id="KW-0597">Phosphoprotein</keyword>
<keyword id="KW-1185">Reference proteome</keyword>
<keyword id="KW-0677">Repeat</keyword>
<keyword id="KW-0964">Secreted</keyword>
<keyword id="KW-0832">Ubl conjugation</keyword>
<feature type="initiator methionine" description="Removed" evidence="7 9 11">
    <location>
        <position position="1"/>
    </location>
</feature>
<feature type="chain" id="PRO_0000067472" description="Annexin A2">
    <location>
        <begin position="2"/>
        <end position="339"/>
    </location>
</feature>
<feature type="repeat" description="Annexin 1" evidence="6">
    <location>
        <begin position="33"/>
        <end position="104"/>
    </location>
</feature>
<feature type="repeat" description="Annexin 2" evidence="6">
    <location>
        <begin position="105"/>
        <end position="176"/>
    </location>
</feature>
<feature type="repeat" description="Annexin 3" evidence="6">
    <location>
        <begin position="189"/>
        <end position="261"/>
    </location>
</feature>
<feature type="repeat" description="Annexin 4" evidence="6">
    <location>
        <begin position="265"/>
        <end position="336"/>
    </location>
</feature>
<feature type="region of interest" description="S100A10-binding site">
    <location>
        <begin position="2"/>
        <end position="24"/>
    </location>
</feature>
<feature type="modified residue" description="N-acetylserine" evidence="7">
    <location>
        <position position="2"/>
    </location>
</feature>
<feature type="modified residue" description="Phosphotyrosine; by SRC" evidence="3">
    <location>
        <position position="24"/>
    </location>
</feature>
<feature type="modified residue" description="Phosphoserine; by PKC" evidence="3">
    <location>
        <position position="26"/>
    </location>
</feature>
<feature type="modified residue" description="N6-acetyllysine; alternate" evidence="4">
    <location>
        <position position="49"/>
    </location>
</feature>
<feature type="modified residue" description="N6-acetyllysine" evidence="4">
    <location>
        <position position="152"/>
    </location>
</feature>
<feature type="modified residue" description="Phosphoserine" evidence="3">
    <location>
        <position position="184"/>
    </location>
</feature>
<feature type="modified residue" description="Phosphotyrosine" evidence="4">
    <location>
        <position position="199"/>
    </location>
</feature>
<feature type="modified residue" description="N6-acetyllysine" evidence="4">
    <location>
        <position position="227"/>
    </location>
</feature>
<feature type="cross-link" description="Glycyl lysine isopeptide (Lys-Gly) (interchain with G-Cter in SUMO1); alternate" evidence="3">
    <location>
        <position position="49"/>
    </location>
</feature>
<feature type="cross-link" description="Glycyl lysine isopeptide (Lys-Gly) (interchain with G-Cter in SUMO2); alternate" evidence="3">
    <location>
        <position position="49"/>
    </location>
</feature>
<feature type="sequence conflict" description="In Ref. 5; AA sequence." evidence="12" ref="5">
    <original>C</original>
    <variation>P</variation>
    <location>
        <position position="223"/>
    </location>
</feature>
<feature type="sequence conflict" description="In Ref. 2; AA sequence." evidence="12" ref="2">
    <original>F</original>
    <variation>S</variation>
    <location>
        <position position="229"/>
    </location>
</feature>
<feature type="sequence conflict" description="In Ref. 5; AA sequence." evidence="12" ref="5">
    <original>E</original>
    <variation>S</variation>
    <location>
        <position position="230"/>
    </location>
</feature>
<accession>P19620</accession>
<accession>Q5Y2C7</accession>
<dbReference type="EMBL" id="AY706383">
    <property type="protein sequence ID" value="AAU85387.1"/>
    <property type="molecule type" value="mRNA"/>
</dbReference>
<dbReference type="PIR" id="S01128">
    <property type="entry name" value="S01128"/>
</dbReference>
<dbReference type="RefSeq" id="NP_001005726.1">
    <property type="nucleotide sequence ID" value="NM_001005726.1"/>
</dbReference>
<dbReference type="FunCoup" id="P19620">
    <property type="interactions" value="437"/>
</dbReference>
<dbReference type="IntAct" id="P19620">
    <property type="interactions" value="3"/>
</dbReference>
<dbReference type="MINT" id="P19620"/>
<dbReference type="STRING" id="9823.ENSSSCP00000031749"/>
<dbReference type="iPTMnet" id="P19620"/>
<dbReference type="PaxDb" id="9823-ENSSSCP00000004935"/>
<dbReference type="PeptideAtlas" id="P19620"/>
<dbReference type="GeneID" id="406192"/>
<dbReference type="KEGG" id="ssc:406192"/>
<dbReference type="CTD" id="302"/>
<dbReference type="eggNOG" id="KOG0819">
    <property type="taxonomic scope" value="Eukaryota"/>
</dbReference>
<dbReference type="InParanoid" id="P19620"/>
<dbReference type="OrthoDB" id="37886at2759"/>
<dbReference type="Proteomes" id="UP000008227">
    <property type="component" value="Unplaced"/>
</dbReference>
<dbReference type="Proteomes" id="UP000314985">
    <property type="component" value="Unplaced"/>
</dbReference>
<dbReference type="Proteomes" id="UP000694570">
    <property type="component" value="Unplaced"/>
</dbReference>
<dbReference type="Proteomes" id="UP000694571">
    <property type="component" value="Unplaced"/>
</dbReference>
<dbReference type="Proteomes" id="UP000694720">
    <property type="component" value="Unplaced"/>
</dbReference>
<dbReference type="Proteomes" id="UP000694722">
    <property type="component" value="Unplaced"/>
</dbReference>
<dbReference type="Proteomes" id="UP000694723">
    <property type="component" value="Unplaced"/>
</dbReference>
<dbReference type="Proteomes" id="UP000694724">
    <property type="component" value="Unplaced"/>
</dbReference>
<dbReference type="Proteomes" id="UP000694725">
    <property type="component" value="Unplaced"/>
</dbReference>
<dbReference type="Proteomes" id="UP000694726">
    <property type="component" value="Unplaced"/>
</dbReference>
<dbReference type="Proteomes" id="UP000694727">
    <property type="component" value="Unplaced"/>
</dbReference>
<dbReference type="Proteomes" id="UP000694728">
    <property type="component" value="Unplaced"/>
</dbReference>
<dbReference type="GO" id="GO:1990665">
    <property type="term" value="C:AnxA2-p11 complex"/>
    <property type="evidence" value="ECO:0000314"/>
    <property type="project" value="UniProtKB"/>
</dbReference>
<dbReference type="GO" id="GO:0005604">
    <property type="term" value="C:basement membrane"/>
    <property type="evidence" value="ECO:0007669"/>
    <property type="project" value="UniProtKB-SubCell"/>
</dbReference>
<dbReference type="GO" id="GO:0005737">
    <property type="term" value="C:cytoplasm"/>
    <property type="evidence" value="ECO:0000250"/>
    <property type="project" value="UniProtKB"/>
</dbReference>
<dbReference type="GO" id="GO:0005768">
    <property type="term" value="C:endosome"/>
    <property type="evidence" value="ECO:0000250"/>
    <property type="project" value="UniProtKB"/>
</dbReference>
<dbReference type="GO" id="GO:0005576">
    <property type="term" value="C:extracellular region"/>
    <property type="evidence" value="ECO:0007669"/>
    <property type="project" value="UniProtKB-KW"/>
</dbReference>
<dbReference type="GO" id="GO:0042470">
    <property type="term" value="C:melanosome"/>
    <property type="evidence" value="ECO:0007669"/>
    <property type="project" value="UniProtKB-SubCell"/>
</dbReference>
<dbReference type="GO" id="GO:0005634">
    <property type="term" value="C:nucleus"/>
    <property type="evidence" value="ECO:0000318"/>
    <property type="project" value="GO_Central"/>
</dbReference>
<dbReference type="GO" id="GO:0005886">
    <property type="term" value="C:plasma membrane"/>
    <property type="evidence" value="ECO:0000318"/>
    <property type="project" value="GO_Central"/>
</dbReference>
<dbReference type="GO" id="GO:0012506">
    <property type="term" value="C:vesicle membrane"/>
    <property type="evidence" value="ECO:0000318"/>
    <property type="project" value="GO_Central"/>
</dbReference>
<dbReference type="GO" id="GO:0005509">
    <property type="term" value="F:calcium ion binding"/>
    <property type="evidence" value="ECO:0007669"/>
    <property type="project" value="InterPro"/>
</dbReference>
<dbReference type="GO" id="GO:0005544">
    <property type="term" value="F:calcium-dependent phospholipid binding"/>
    <property type="evidence" value="ECO:0000318"/>
    <property type="project" value="GO_Central"/>
</dbReference>
<dbReference type="GO" id="GO:0008092">
    <property type="term" value="F:cytoskeletal protein binding"/>
    <property type="evidence" value="ECO:0007669"/>
    <property type="project" value="InterPro"/>
</dbReference>
<dbReference type="GO" id="GO:0001786">
    <property type="term" value="F:phosphatidylserine binding"/>
    <property type="evidence" value="ECO:0000318"/>
    <property type="project" value="GO_Central"/>
</dbReference>
<dbReference type="GO" id="GO:0004859">
    <property type="term" value="F:phospholipase inhibitor activity"/>
    <property type="evidence" value="ECO:0007669"/>
    <property type="project" value="InterPro"/>
</dbReference>
<dbReference type="GO" id="GO:0044548">
    <property type="term" value="F:S100 protein binding"/>
    <property type="evidence" value="ECO:0000353"/>
    <property type="project" value="UniProtKB"/>
</dbReference>
<dbReference type="GO" id="GO:0044794">
    <property type="term" value="P:positive regulation by host of viral process"/>
    <property type="evidence" value="ECO:0000315"/>
    <property type="project" value="AgBase"/>
</dbReference>
<dbReference type="GO" id="GO:1905602">
    <property type="term" value="P:positive regulation of receptor-mediated endocytosis involved in cholesterol transport"/>
    <property type="evidence" value="ECO:0000318"/>
    <property type="project" value="GO_Central"/>
</dbReference>
<dbReference type="GO" id="GO:1903902">
    <property type="term" value="P:positive regulation of viral life cycle"/>
    <property type="evidence" value="ECO:0000315"/>
    <property type="project" value="AgBase"/>
</dbReference>
<dbReference type="FunFam" id="1.10.220.10:FF:000001">
    <property type="entry name" value="Annexin"/>
    <property type="match status" value="1"/>
</dbReference>
<dbReference type="FunFam" id="1.10.220.10:FF:000002">
    <property type="entry name" value="Annexin"/>
    <property type="match status" value="1"/>
</dbReference>
<dbReference type="FunFam" id="1.10.220.10:FF:000003">
    <property type="entry name" value="Annexin"/>
    <property type="match status" value="1"/>
</dbReference>
<dbReference type="FunFam" id="1.10.220.10:FF:000007">
    <property type="entry name" value="Annexin"/>
    <property type="match status" value="1"/>
</dbReference>
<dbReference type="Gene3D" id="1.10.220.10">
    <property type="entry name" value="Annexin"/>
    <property type="match status" value="4"/>
</dbReference>
<dbReference type="InterPro" id="IPR001464">
    <property type="entry name" value="Annexin"/>
</dbReference>
<dbReference type="InterPro" id="IPR018502">
    <property type="entry name" value="Annexin_repeat"/>
</dbReference>
<dbReference type="InterPro" id="IPR018252">
    <property type="entry name" value="Annexin_repeat_CS"/>
</dbReference>
<dbReference type="InterPro" id="IPR037104">
    <property type="entry name" value="Annexin_sf"/>
</dbReference>
<dbReference type="InterPro" id="IPR002389">
    <property type="entry name" value="ANX2"/>
</dbReference>
<dbReference type="PANTHER" id="PTHR10502">
    <property type="entry name" value="ANNEXIN"/>
    <property type="match status" value="1"/>
</dbReference>
<dbReference type="PANTHER" id="PTHR10502:SF18">
    <property type="entry name" value="ANNEXIN A2-RELATED"/>
    <property type="match status" value="1"/>
</dbReference>
<dbReference type="Pfam" id="PF00191">
    <property type="entry name" value="Annexin"/>
    <property type="match status" value="4"/>
</dbReference>
<dbReference type="PRINTS" id="PR00196">
    <property type="entry name" value="ANNEXIN"/>
</dbReference>
<dbReference type="PRINTS" id="PR00198">
    <property type="entry name" value="ANNEXINII"/>
</dbReference>
<dbReference type="SMART" id="SM00335">
    <property type="entry name" value="ANX"/>
    <property type="match status" value="4"/>
</dbReference>
<dbReference type="SUPFAM" id="SSF47874">
    <property type="entry name" value="Annexin"/>
    <property type="match status" value="1"/>
</dbReference>
<dbReference type="PROSITE" id="PS00223">
    <property type="entry name" value="ANNEXIN_1"/>
    <property type="match status" value="4"/>
</dbReference>
<dbReference type="PROSITE" id="PS51897">
    <property type="entry name" value="ANNEXIN_2"/>
    <property type="match status" value="4"/>
</dbReference>
<evidence type="ECO:0000250" key="1"/>
<evidence type="ECO:0000250" key="2">
    <source>
        <dbReference type="UniProtKB" id="A2SW69"/>
    </source>
</evidence>
<evidence type="ECO:0000250" key="3">
    <source>
        <dbReference type="UniProtKB" id="P07355"/>
    </source>
</evidence>
<evidence type="ECO:0000250" key="4">
    <source>
        <dbReference type="UniProtKB" id="P07356"/>
    </source>
</evidence>
<evidence type="ECO:0000250" key="5">
    <source>
        <dbReference type="UniProtKB" id="Q6TEQ7"/>
    </source>
</evidence>
<evidence type="ECO:0000255" key="6">
    <source>
        <dbReference type="PROSITE-ProRule" id="PRU01245"/>
    </source>
</evidence>
<evidence type="ECO:0000269" key="7">
    <source>
    </source>
</evidence>
<evidence type="ECO:0000269" key="8">
    <source>
    </source>
</evidence>
<evidence type="ECO:0000269" key="9">
    <source>
    </source>
</evidence>
<evidence type="ECO:0000269" key="10">
    <source>
    </source>
</evidence>
<evidence type="ECO:0000269" key="11">
    <source>
    </source>
</evidence>
<evidence type="ECO:0000305" key="12"/>
<protein>
    <recommendedName>
        <fullName>Annexin A2</fullName>
    </recommendedName>
    <alternativeName>
        <fullName>Annexin II</fullName>
    </alternativeName>
    <alternativeName>
        <fullName>Annexin-2</fullName>
    </alternativeName>
    <alternativeName>
        <fullName>Calpactin I heavy chain</fullName>
    </alternativeName>
    <alternativeName>
        <fullName>Calpactin-1 heavy chain</fullName>
    </alternativeName>
    <alternativeName>
        <fullName>Chromobindin-8</fullName>
    </alternativeName>
    <alternativeName>
        <fullName>Lipocortin II</fullName>
    </alternativeName>
    <alternativeName>
        <fullName>Placental anticoagulant protein IV</fullName>
        <shortName>PAP-IV</shortName>
    </alternativeName>
    <alternativeName>
        <fullName>Protein I</fullName>
    </alternativeName>
    <alternativeName>
        <fullName>p36</fullName>
    </alternativeName>
</protein>
<sequence>MSTVHEILCKLSLEGDHSTPASAYGSVKAYTNFDAERDALNIETAIKTKGVDEVTIVNILTNRSNEQRQDIAFAYQRRTKKELASALKSALSGHLETVILGLLKTPAQYDASELKASMKGLGTDEDSLIEIICSRTNQELQEINRVYKEMYKTDLEKDIISDTSGDFRKLMVALAKGRRAEDGSVIDYELIDQDARDLYDAGVKRKGTDVPKWISIMTERSVCHLQKVFERYKSYSPYDMLESIKKEVKGDLENAFLNLVQCIQNKPLYFADRLYDSMKGKGTRDKVLIXIMVSRSEVDMLKIRSEFKRKYGKSLYNYIQQDTKGDYQKALLYLCGGDD</sequence>
<proteinExistence type="evidence at protein level"/>